<protein>
    <recommendedName>
        <fullName>Glyceraldehyde-3-phosphate dehydrogenase</fullName>
        <shortName>GAPDH</shortName>
        <ecNumber>1.2.1.12</ecNumber>
    </recommendedName>
</protein>
<reference key="1">
    <citation type="submission" date="2000-06" db="EMBL/GenBank/DDBJ databases">
        <title>Cloning and molecular characterization of the glyceraldehyde-3-phosphate dehydrogenase-encoding gene and cDNA from the human dimorphic, pathogenic fungus Histoplasma capsulatum.</title>
        <authorList>
            <person name="Ignatov A."/>
            <person name="Mersman D."/>
            <person name="Keath E."/>
        </authorList>
    </citation>
    <scope>NUCLEOTIDE SEQUENCE [GENOMIC DNA / MRNA]</scope>
    <source>
        <strain>ATCC 26032 / G217B</strain>
        <strain>ATCC 38904 / Downs</strain>
    </source>
</reference>
<organism>
    <name type="scientific">Ajellomyces capsulatus</name>
    <name type="common">Darling's disease fungus</name>
    <name type="synonym">Histoplasma capsulatum</name>
    <dbReference type="NCBI Taxonomy" id="5037"/>
    <lineage>
        <taxon>Eukaryota</taxon>
        <taxon>Fungi</taxon>
        <taxon>Dikarya</taxon>
        <taxon>Ascomycota</taxon>
        <taxon>Pezizomycotina</taxon>
        <taxon>Eurotiomycetes</taxon>
        <taxon>Eurotiomycetidae</taxon>
        <taxon>Onygenales</taxon>
        <taxon>Ajellomycetaceae</taxon>
        <taxon>Histoplasma</taxon>
    </lineage>
</organism>
<dbReference type="EC" id="1.2.1.12"/>
<dbReference type="EMBL" id="AF273704">
    <property type="protein sequence ID" value="AAG33369.1"/>
    <property type="molecule type" value="mRNA"/>
</dbReference>
<dbReference type="EMBL" id="AF273703">
    <property type="protein sequence ID" value="AAG33368.1"/>
    <property type="molecule type" value="Genomic_DNA"/>
</dbReference>
<dbReference type="SMR" id="Q9HFX1"/>
<dbReference type="VEuPathDB" id="FungiDB:I7I51_00028"/>
<dbReference type="OrthoDB" id="1152826at2759"/>
<dbReference type="UniPathway" id="UPA00109">
    <property type="reaction ID" value="UER00184"/>
</dbReference>
<dbReference type="GO" id="GO:0005829">
    <property type="term" value="C:cytosol"/>
    <property type="evidence" value="ECO:0007669"/>
    <property type="project" value="TreeGrafter"/>
</dbReference>
<dbReference type="GO" id="GO:0004365">
    <property type="term" value="F:glyceraldehyde-3-phosphate dehydrogenase (NAD+) (phosphorylating) activity"/>
    <property type="evidence" value="ECO:0007669"/>
    <property type="project" value="UniProtKB-EC"/>
</dbReference>
<dbReference type="GO" id="GO:0051287">
    <property type="term" value="F:NAD binding"/>
    <property type="evidence" value="ECO:0007669"/>
    <property type="project" value="InterPro"/>
</dbReference>
<dbReference type="GO" id="GO:0050661">
    <property type="term" value="F:NADP binding"/>
    <property type="evidence" value="ECO:0007669"/>
    <property type="project" value="InterPro"/>
</dbReference>
<dbReference type="GO" id="GO:0006006">
    <property type="term" value="P:glucose metabolic process"/>
    <property type="evidence" value="ECO:0007669"/>
    <property type="project" value="InterPro"/>
</dbReference>
<dbReference type="GO" id="GO:0006096">
    <property type="term" value="P:glycolytic process"/>
    <property type="evidence" value="ECO:0007669"/>
    <property type="project" value="UniProtKB-UniPathway"/>
</dbReference>
<dbReference type="CDD" id="cd18126">
    <property type="entry name" value="GAPDH_I_C"/>
    <property type="match status" value="1"/>
</dbReference>
<dbReference type="CDD" id="cd05214">
    <property type="entry name" value="GAPDH_I_N"/>
    <property type="match status" value="1"/>
</dbReference>
<dbReference type="FunFam" id="3.30.360.10:FF:000001">
    <property type="entry name" value="Glyceraldehyde-3-phosphate dehydrogenase"/>
    <property type="match status" value="1"/>
</dbReference>
<dbReference type="FunFam" id="3.40.50.720:FF:000020">
    <property type="entry name" value="Glyceraldehyde-3-phosphate dehydrogenase"/>
    <property type="match status" value="1"/>
</dbReference>
<dbReference type="Gene3D" id="3.30.360.10">
    <property type="entry name" value="Dihydrodipicolinate Reductase, domain 2"/>
    <property type="match status" value="1"/>
</dbReference>
<dbReference type="Gene3D" id="3.40.50.720">
    <property type="entry name" value="NAD(P)-binding Rossmann-like Domain"/>
    <property type="match status" value="1"/>
</dbReference>
<dbReference type="InterPro" id="IPR020831">
    <property type="entry name" value="GlycerAld/Erythrose_P_DH"/>
</dbReference>
<dbReference type="InterPro" id="IPR020830">
    <property type="entry name" value="GlycerAld_3-P_DH_AS"/>
</dbReference>
<dbReference type="InterPro" id="IPR020829">
    <property type="entry name" value="GlycerAld_3-P_DH_cat"/>
</dbReference>
<dbReference type="InterPro" id="IPR020828">
    <property type="entry name" value="GlycerAld_3-P_DH_NAD(P)-bd"/>
</dbReference>
<dbReference type="InterPro" id="IPR006424">
    <property type="entry name" value="Glyceraldehyde-3-P_DH_1"/>
</dbReference>
<dbReference type="InterPro" id="IPR036291">
    <property type="entry name" value="NAD(P)-bd_dom_sf"/>
</dbReference>
<dbReference type="NCBIfam" id="TIGR01534">
    <property type="entry name" value="GAPDH-I"/>
    <property type="match status" value="1"/>
</dbReference>
<dbReference type="PANTHER" id="PTHR10836">
    <property type="entry name" value="GLYCERALDEHYDE 3-PHOSPHATE DEHYDROGENASE"/>
    <property type="match status" value="1"/>
</dbReference>
<dbReference type="PANTHER" id="PTHR10836:SF76">
    <property type="entry name" value="GLYCERALDEHYDE-3-PHOSPHATE DEHYDROGENASE-RELATED"/>
    <property type="match status" value="1"/>
</dbReference>
<dbReference type="Pfam" id="PF02800">
    <property type="entry name" value="Gp_dh_C"/>
    <property type="match status" value="1"/>
</dbReference>
<dbReference type="Pfam" id="PF00044">
    <property type="entry name" value="Gp_dh_N"/>
    <property type="match status" value="1"/>
</dbReference>
<dbReference type="PIRSF" id="PIRSF000149">
    <property type="entry name" value="GAP_DH"/>
    <property type="match status" value="1"/>
</dbReference>
<dbReference type="PRINTS" id="PR00078">
    <property type="entry name" value="G3PDHDRGNASE"/>
</dbReference>
<dbReference type="SMART" id="SM00846">
    <property type="entry name" value="Gp_dh_N"/>
    <property type="match status" value="1"/>
</dbReference>
<dbReference type="SUPFAM" id="SSF55347">
    <property type="entry name" value="Glyceraldehyde-3-phosphate dehydrogenase-like, C-terminal domain"/>
    <property type="match status" value="1"/>
</dbReference>
<dbReference type="SUPFAM" id="SSF51735">
    <property type="entry name" value="NAD(P)-binding Rossmann-fold domains"/>
    <property type="match status" value="1"/>
</dbReference>
<dbReference type="PROSITE" id="PS00071">
    <property type="entry name" value="GAPDH"/>
    <property type="match status" value="1"/>
</dbReference>
<feature type="chain" id="PRO_0000145535" description="Glyceraldehyde-3-phosphate dehydrogenase">
    <location>
        <begin position="1"/>
        <end position="337"/>
    </location>
</feature>
<feature type="active site" description="Nucleophile" evidence="2">
    <location>
        <position position="151"/>
    </location>
</feature>
<feature type="binding site" evidence="1">
    <location>
        <begin position="12"/>
        <end position="13"/>
    </location>
    <ligand>
        <name>NAD(+)</name>
        <dbReference type="ChEBI" id="CHEBI:57540"/>
    </ligand>
</feature>
<feature type="binding site" evidence="1">
    <location>
        <position position="34"/>
    </location>
    <ligand>
        <name>NAD(+)</name>
        <dbReference type="ChEBI" id="CHEBI:57540"/>
    </ligand>
</feature>
<feature type="binding site" evidence="1">
    <location>
        <position position="79"/>
    </location>
    <ligand>
        <name>NAD(+)</name>
        <dbReference type="ChEBI" id="CHEBI:57540"/>
    </ligand>
</feature>
<feature type="binding site" evidence="1">
    <location>
        <begin position="150"/>
        <end position="152"/>
    </location>
    <ligand>
        <name>D-glyceraldehyde 3-phosphate</name>
        <dbReference type="ChEBI" id="CHEBI:59776"/>
    </ligand>
</feature>
<feature type="binding site" evidence="1">
    <location>
        <position position="181"/>
    </location>
    <ligand>
        <name>D-glyceraldehyde 3-phosphate</name>
        <dbReference type="ChEBI" id="CHEBI:59776"/>
    </ligand>
</feature>
<feature type="binding site" evidence="1">
    <location>
        <begin position="210"/>
        <end position="211"/>
    </location>
    <ligand>
        <name>D-glyceraldehyde 3-phosphate</name>
        <dbReference type="ChEBI" id="CHEBI:59776"/>
    </ligand>
</feature>
<feature type="binding site" evidence="1">
    <location>
        <position position="233"/>
    </location>
    <ligand>
        <name>D-glyceraldehyde 3-phosphate</name>
        <dbReference type="ChEBI" id="CHEBI:59776"/>
    </ligand>
</feature>
<feature type="binding site" evidence="1">
    <location>
        <position position="315"/>
    </location>
    <ligand>
        <name>NAD(+)</name>
        <dbReference type="ChEBI" id="CHEBI:57540"/>
    </ligand>
</feature>
<feature type="site" description="Activates thiol group during catalysis" evidence="1">
    <location>
        <position position="178"/>
    </location>
</feature>
<feature type="sequence variant" description="In strain: ATCC 26032 / G217B.">
    <original>N</original>
    <variation>D</variation>
    <location>
        <position position="28"/>
    </location>
</feature>
<feature type="sequence variant" description="In strain: ATCC 26032 / G217B.">
    <original>D</original>
    <variation>E</variation>
    <location>
        <position position="60"/>
    </location>
</feature>
<feature type="sequence variant" description="In strain: ATCC 26032 / G217B.">
    <original>S</original>
    <variation>N</variation>
    <location>
        <position position="83"/>
    </location>
</feature>
<gene>
    <name type="primary">GPD</name>
</gene>
<comment type="catalytic activity">
    <reaction evidence="2">
        <text>D-glyceraldehyde 3-phosphate + phosphate + NAD(+) = (2R)-3-phospho-glyceroyl phosphate + NADH + H(+)</text>
        <dbReference type="Rhea" id="RHEA:10300"/>
        <dbReference type="ChEBI" id="CHEBI:15378"/>
        <dbReference type="ChEBI" id="CHEBI:43474"/>
        <dbReference type="ChEBI" id="CHEBI:57540"/>
        <dbReference type="ChEBI" id="CHEBI:57604"/>
        <dbReference type="ChEBI" id="CHEBI:57945"/>
        <dbReference type="ChEBI" id="CHEBI:59776"/>
        <dbReference type="EC" id="1.2.1.12"/>
    </reaction>
</comment>
<comment type="pathway">
    <text>Carbohydrate degradation; glycolysis; pyruvate from D-glyceraldehyde 3-phosphate: step 1/5.</text>
</comment>
<comment type="subunit">
    <text evidence="1">Homotetramer.</text>
</comment>
<comment type="subcellular location">
    <subcellularLocation>
        <location evidence="1">Cytoplasm</location>
    </subcellularLocation>
</comment>
<comment type="similarity">
    <text evidence="3">Belongs to the glyceraldehyde-3-phosphate dehydrogenase family.</text>
</comment>
<evidence type="ECO:0000250" key="1"/>
<evidence type="ECO:0000255" key="2">
    <source>
        <dbReference type="PROSITE-ProRule" id="PRU10009"/>
    </source>
</evidence>
<evidence type="ECO:0000305" key="3"/>
<sequence>MVVKVGINGFGRIGRIVFRNAIEHGEVNVVAVNDPFIETHYAAYMLKYDSTHGQFKGTIDVNSNGLTVNGKAVTFYQERDPASIPWGKHGVEYVVESTGVFTTTEKASAHLKGGAKKVIISAPSADAPMFVMGVNEKTYDPSVNVLSNASCTTNCLAPLAKVINDNFGLTEGLMTTIHSYTATQKTVDGPSSKDWRGGRTAAQNIIPSSTGAAKAVGKVIPSLNGKLTGMSMRVPTANVSVVDLTCKTEKPVTYDQIKQTIKKASEGELKGILGYSEDALVSSDLNGDSRSSIFDASAGIALNDHFIKLISWYDNEWGYSRRVVDLIAYIAKVDAGK</sequence>
<name>G3P_AJECA</name>
<keyword id="KW-0963">Cytoplasm</keyword>
<keyword id="KW-0324">Glycolysis</keyword>
<keyword id="KW-0520">NAD</keyword>
<keyword id="KW-0560">Oxidoreductase</keyword>
<accession>Q9HFX1</accession>
<accession>Q9HFX2</accession>
<proteinExistence type="evidence at transcript level"/>